<accession>Q03F44</accession>
<sequence length="316" mass="34696">MKWTEVNVKTTNEAVEAVSSIFDGLDAVGVKIENALDFENYRASNPAELMELKDIPHITEGAIVSAYYPDDTTNIDVILSQLRTKVNALVDFGLDIGEASITTVEVQDDNWATAWKKYYHPVRITRYLTVKPSWSDYQASFSDEKVISLDPGMAFGTGTHPTTRLCLQALEMTMRGGETLYDVGTGSGVLSIAAKHLGASDVEAFDVDDIAVAAAQENFDLNPIAKDIKVSANDLLKGINRPVDTIVANILSDILVPLIPQAKQLLNSNGYFILSGIIDDKLELVIDTLIANDFKIEEVLHYGEWRGVIATNRKDD</sequence>
<protein>
    <recommendedName>
        <fullName evidence="1">Ribosomal protein L11 methyltransferase</fullName>
        <shortName evidence="1">L11 Mtase</shortName>
        <ecNumber evidence="1">2.1.1.-</ecNumber>
    </recommendedName>
</protein>
<proteinExistence type="inferred from homology"/>
<feature type="chain" id="PRO_1000046053" description="Ribosomal protein L11 methyltransferase">
    <location>
        <begin position="1"/>
        <end position="316"/>
    </location>
</feature>
<feature type="binding site" evidence="1">
    <location>
        <position position="163"/>
    </location>
    <ligand>
        <name>S-adenosyl-L-methionine</name>
        <dbReference type="ChEBI" id="CHEBI:59789"/>
    </ligand>
</feature>
<feature type="binding site" evidence="1">
    <location>
        <position position="184"/>
    </location>
    <ligand>
        <name>S-adenosyl-L-methionine</name>
        <dbReference type="ChEBI" id="CHEBI:59789"/>
    </ligand>
</feature>
<feature type="binding site" evidence="1">
    <location>
        <position position="206"/>
    </location>
    <ligand>
        <name>S-adenosyl-L-methionine</name>
        <dbReference type="ChEBI" id="CHEBI:59789"/>
    </ligand>
</feature>
<feature type="binding site" evidence="1">
    <location>
        <position position="249"/>
    </location>
    <ligand>
        <name>S-adenosyl-L-methionine</name>
        <dbReference type="ChEBI" id="CHEBI:59789"/>
    </ligand>
</feature>
<name>PRMA_PEDPA</name>
<comment type="function">
    <text evidence="1">Methylates ribosomal protein L11.</text>
</comment>
<comment type="catalytic activity">
    <reaction evidence="1">
        <text>L-lysyl-[protein] + 3 S-adenosyl-L-methionine = N(6),N(6),N(6)-trimethyl-L-lysyl-[protein] + 3 S-adenosyl-L-homocysteine + 3 H(+)</text>
        <dbReference type="Rhea" id="RHEA:54192"/>
        <dbReference type="Rhea" id="RHEA-COMP:9752"/>
        <dbReference type="Rhea" id="RHEA-COMP:13826"/>
        <dbReference type="ChEBI" id="CHEBI:15378"/>
        <dbReference type="ChEBI" id="CHEBI:29969"/>
        <dbReference type="ChEBI" id="CHEBI:57856"/>
        <dbReference type="ChEBI" id="CHEBI:59789"/>
        <dbReference type="ChEBI" id="CHEBI:61961"/>
    </reaction>
</comment>
<comment type="subcellular location">
    <subcellularLocation>
        <location evidence="1">Cytoplasm</location>
    </subcellularLocation>
</comment>
<comment type="similarity">
    <text evidence="1">Belongs to the methyltransferase superfamily. PrmA family.</text>
</comment>
<organism>
    <name type="scientific">Pediococcus pentosaceus (strain ATCC 25745 / CCUG 21536 / LMG 10740 / 183-1w)</name>
    <dbReference type="NCBI Taxonomy" id="278197"/>
    <lineage>
        <taxon>Bacteria</taxon>
        <taxon>Bacillati</taxon>
        <taxon>Bacillota</taxon>
        <taxon>Bacilli</taxon>
        <taxon>Lactobacillales</taxon>
        <taxon>Lactobacillaceae</taxon>
        <taxon>Pediococcus</taxon>
    </lineage>
</organism>
<gene>
    <name evidence="1" type="primary">prmA</name>
    <name type="ordered locus">PEPE_1123</name>
</gene>
<reference key="1">
    <citation type="journal article" date="2006" name="Proc. Natl. Acad. Sci. U.S.A.">
        <title>Comparative genomics of the lactic acid bacteria.</title>
        <authorList>
            <person name="Makarova K.S."/>
            <person name="Slesarev A."/>
            <person name="Wolf Y.I."/>
            <person name="Sorokin A."/>
            <person name="Mirkin B."/>
            <person name="Koonin E.V."/>
            <person name="Pavlov A."/>
            <person name="Pavlova N."/>
            <person name="Karamychev V."/>
            <person name="Polouchine N."/>
            <person name="Shakhova V."/>
            <person name="Grigoriev I."/>
            <person name="Lou Y."/>
            <person name="Rohksar D."/>
            <person name="Lucas S."/>
            <person name="Huang K."/>
            <person name="Goodstein D.M."/>
            <person name="Hawkins T."/>
            <person name="Plengvidhya V."/>
            <person name="Welker D."/>
            <person name="Hughes J."/>
            <person name="Goh Y."/>
            <person name="Benson A."/>
            <person name="Baldwin K."/>
            <person name="Lee J.-H."/>
            <person name="Diaz-Muniz I."/>
            <person name="Dosti B."/>
            <person name="Smeianov V."/>
            <person name="Wechter W."/>
            <person name="Barabote R."/>
            <person name="Lorca G."/>
            <person name="Altermann E."/>
            <person name="Barrangou R."/>
            <person name="Ganesan B."/>
            <person name="Xie Y."/>
            <person name="Rawsthorne H."/>
            <person name="Tamir D."/>
            <person name="Parker C."/>
            <person name="Breidt F."/>
            <person name="Broadbent J.R."/>
            <person name="Hutkins R."/>
            <person name="O'Sullivan D."/>
            <person name="Steele J."/>
            <person name="Unlu G."/>
            <person name="Saier M.H. Jr."/>
            <person name="Klaenhammer T."/>
            <person name="Richardson P."/>
            <person name="Kozyavkin S."/>
            <person name="Weimer B.C."/>
            <person name="Mills D.A."/>
        </authorList>
    </citation>
    <scope>NUCLEOTIDE SEQUENCE [LARGE SCALE GENOMIC DNA]</scope>
    <source>
        <strain>ATCC 25745 / CCUG 21536 / LMG 10740 / 183-1w</strain>
    </source>
</reference>
<dbReference type="EC" id="2.1.1.-" evidence="1"/>
<dbReference type="EMBL" id="CP000422">
    <property type="protein sequence ID" value="ABJ68178.1"/>
    <property type="molecule type" value="Genomic_DNA"/>
</dbReference>
<dbReference type="RefSeq" id="WP_011673506.1">
    <property type="nucleotide sequence ID" value="NC_008525.1"/>
</dbReference>
<dbReference type="SMR" id="Q03F44"/>
<dbReference type="STRING" id="278197.PEPE_1123"/>
<dbReference type="GeneID" id="33062574"/>
<dbReference type="KEGG" id="ppe:PEPE_1123"/>
<dbReference type="eggNOG" id="COG2264">
    <property type="taxonomic scope" value="Bacteria"/>
</dbReference>
<dbReference type="HOGENOM" id="CLU_049382_0_1_9"/>
<dbReference type="OrthoDB" id="9785995at2"/>
<dbReference type="Proteomes" id="UP000000773">
    <property type="component" value="Chromosome"/>
</dbReference>
<dbReference type="GO" id="GO:0005737">
    <property type="term" value="C:cytoplasm"/>
    <property type="evidence" value="ECO:0007669"/>
    <property type="project" value="UniProtKB-SubCell"/>
</dbReference>
<dbReference type="GO" id="GO:0016279">
    <property type="term" value="F:protein-lysine N-methyltransferase activity"/>
    <property type="evidence" value="ECO:0007669"/>
    <property type="project" value="RHEA"/>
</dbReference>
<dbReference type="GO" id="GO:0032259">
    <property type="term" value="P:methylation"/>
    <property type="evidence" value="ECO:0007669"/>
    <property type="project" value="UniProtKB-KW"/>
</dbReference>
<dbReference type="CDD" id="cd02440">
    <property type="entry name" value="AdoMet_MTases"/>
    <property type="match status" value="1"/>
</dbReference>
<dbReference type="Gene3D" id="3.40.50.150">
    <property type="entry name" value="Vaccinia Virus protein VP39"/>
    <property type="match status" value="1"/>
</dbReference>
<dbReference type="HAMAP" id="MF_00735">
    <property type="entry name" value="Methyltr_PrmA"/>
    <property type="match status" value="1"/>
</dbReference>
<dbReference type="InterPro" id="IPR050078">
    <property type="entry name" value="Ribosomal_L11_MeTrfase_PrmA"/>
</dbReference>
<dbReference type="InterPro" id="IPR004498">
    <property type="entry name" value="Ribosomal_PrmA_MeTrfase"/>
</dbReference>
<dbReference type="InterPro" id="IPR029063">
    <property type="entry name" value="SAM-dependent_MTases_sf"/>
</dbReference>
<dbReference type="NCBIfam" id="TIGR00406">
    <property type="entry name" value="prmA"/>
    <property type="match status" value="1"/>
</dbReference>
<dbReference type="PANTHER" id="PTHR43648">
    <property type="entry name" value="ELECTRON TRANSFER FLAVOPROTEIN BETA SUBUNIT LYSINE METHYLTRANSFERASE"/>
    <property type="match status" value="1"/>
</dbReference>
<dbReference type="PANTHER" id="PTHR43648:SF1">
    <property type="entry name" value="ELECTRON TRANSFER FLAVOPROTEIN BETA SUBUNIT LYSINE METHYLTRANSFERASE"/>
    <property type="match status" value="1"/>
</dbReference>
<dbReference type="Pfam" id="PF06325">
    <property type="entry name" value="PrmA"/>
    <property type="match status" value="1"/>
</dbReference>
<dbReference type="PIRSF" id="PIRSF000401">
    <property type="entry name" value="RPL11_MTase"/>
    <property type="match status" value="1"/>
</dbReference>
<dbReference type="SUPFAM" id="SSF53335">
    <property type="entry name" value="S-adenosyl-L-methionine-dependent methyltransferases"/>
    <property type="match status" value="1"/>
</dbReference>
<evidence type="ECO:0000255" key="1">
    <source>
        <dbReference type="HAMAP-Rule" id="MF_00735"/>
    </source>
</evidence>
<keyword id="KW-0963">Cytoplasm</keyword>
<keyword id="KW-0489">Methyltransferase</keyword>
<keyword id="KW-0949">S-adenosyl-L-methionine</keyword>
<keyword id="KW-0808">Transferase</keyword>